<name>TELO2_XENLA</name>
<protein>
    <recommendedName>
        <fullName>Telomere length regulation protein TEL2 homolog</fullName>
    </recommendedName>
</protein>
<accession>Q6GPP1</accession>
<evidence type="ECO:0000250" key="1"/>
<evidence type="ECO:0000256" key="2">
    <source>
        <dbReference type="SAM" id="MobiDB-lite"/>
    </source>
</evidence>
<evidence type="ECO:0000305" key="3"/>
<keyword id="KW-0158">Chromosome</keyword>
<keyword id="KW-0963">Cytoplasm</keyword>
<keyword id="KW-0472">Membrane</keyword>
<keyword id="KW-0539">Nucleus</keyword>
<keyword id="KW-1185">Reference proteome</keyword>
<keyword id="KW-0779">Telomere</keyword>
<sequence length="835" mass="93679">MDASQADRKVAPVSAVVKNAICELSRINDGERLMEVLLSLKCYLGTRENSTQTQEHAEFNRNHYTPFLEFLVAQMGPQWLDLLTLEKLELWDSFFLEGPADQAFLVLMDSLGKTGPSIRLDRCVHVLERFLQRGALAEVIREVCQQQLESNPTAVLHEAILGRISSLPDHLANCLQQHNKPVFYPNNYYPLLAGSIISVLQMVSDALRDGKNCSISFASQVVGKVCMQGRQKELLSVLVPRLKSLVQSDCIWQRICWRLVESVPDRWMEPVVIGIVQMAPGAEFLSQLLGDLVVKNKRTQFLLTKKMLFLQYGLKKDALQSILGYLSLDASRRYLLVKILRELLEVWSSGSVLKNSSQPQLLHVSRCLLICLGLLNKQEIESCKQDLLVSLTSGARNYLDSSVPAIRRMGMVVAECLSHRIDTEGPGLSFQYEEDEDTRDLKALLKPPHVFEADSADCVKNPEESSPSKSCPKAIEKSKMEAKADQASDSELDSDDDLAPYDMSADTELKKSKAPAYIRDCIEVLLSDDVEKLEVTMTCLATLIQANTSATKEVSVELTKILLHIDDKPSVERFTELRHAALVAVAVTDPVPVSQYLTGEFYSLNYSLRQRMDILDVLSSAAQSLSEKLSHEVSSESRSTGTGQHSIRSTTWTLAEAPADWRKVVEERIASKTRRFSKGQSVPTPVPAPNRYHAVAGHLFFPLIQNYDRQIVTFDLLGEDRLVLGRMVHTLGILMHLALHAPIASQMGKALLEFVWVLRFHIDAFVRQGLLFCISTVLLSVPWERLMTDMAEEVMETQSWLADVAERDSDDDCRRLALNGLFLMEKLRNNIHGTP</sequence>
<gene>
    <name type="primary">telo2</name>
</gene>
<proteinExistence type="evidence at transcript level"/>
<comment type="function">
    <text evidence="1">Regulator of the DNA damage response (DDR). Part of the TTT complex that is required to stabilize protein levels of the phosphatidylinositol 3-kinase-related protein kinase (PIKK) family proteins. Promotes assembly, stabilizes and maintains the activity of TORC complexes, which regulate cell growth and survival in response to nutrient and hormonal signals. May be involved in telomere length regulation (By similarity).</text>
</comment>
<comment type="subcellular location">
    <subcellularLocation>
        <location evidence="1">Cytoplasm</location>
    </subcellularLocation>
    <subcellularLocation>
        <location evidence="1">Membrane</location>
    </subcellularLocation>
    <subcellularLocation>
        <location evidence="1">Nucleus</location>
    </subcellularLocation>
    <subcellularLocation>
        <location evidence="3">Chromosome</location>
        <location evidence="3">Telomere</location>
    </subcellularLocation>
</comment>
<comment type="similarity">
    <text evidence="3">Belongs to the TEL2 family.</text>
</comment>
<comment type="sequence caution" evidence="3">
    <conflict type="erroneous initiation">
        <sequence resource="EMBL-CDS" id="AAH73072"/>
    </conflict>
    <text>Extended N-terminus.</text>
</comment>
<dbReference type="EMBL" id="BC073072">
    <property type="protein sequence ID" value="AAH73072.1"/>
    <property type="status" value="ALT_INIT"/>
    <property type="molecule type" value="mRNA"/>
</dbReference>
<dbReference type="SMR" id="Q6GPP1"/>
<dbReference type="AGR" id="Xenbase:XB-GENE-1010711"/>
<dbReference type="Xenbase" id="XB-GENE-1010711">
    <property type="gene designation" value="telo2.L"/>
</dbReference>
<dbReference type="Proteomes" id="UP000186698">
    <property type="component" value="Unplaced"/>
</dbReference>
<dbReference type="GO" id="GO:0000781">
    <property type="term" value="C:chromosome, telomeric region"/>
    <property type="evidence" value="ECO:0007669"/>
    <property type="project" value="UniProtKB-SubCell"/>
</dbReference>
<dbReference type="GO" id="GO:0005829">
    <property type="term" value="C:cytosol"/>
    <property type="evidence" value="ECO:0000318"/>
    <property type="project" value="GO_Central"/>
</dbReference>
<dbReference type="GO" id="GO:0016020">
    <property type="term" value="C:membrane"/>
    <property type="evidence" value="ECO:0007669"/>
    <property type="project" value="UniProtKB-SubCell"/>
</dbReference>
<dbReference type="GO" id="GO:0005634">
    <property type="term" value="C:nucleus"/>
    <property type="evidence" value="ECO:0007669"/>
    <property type="project" value="UniProtKB-SubCell"/>
</dbReference>
<dbReference type="GO" id="GO:0051879">
    <property type="term" value="F:Hsp90 protein binding"/>
    <property type="evidence" value="ECO:0000318"/>
    <property type="project" value="GO_Central"/>
</dbReference>
<dbReference type="GO" id="GO:0042162">
    <property type="term" value="F:telomeric DNA binding"/>
    <property type="evidence" value="ECO:0000318"/>
    <property type="project" value="GO_Central"/>
</dbReference>
<dbReference type="GO" id="GO:0051083">
    <property type="term" value="P:'de novo' cotranslational protein folding"/>
    <property type="evidence" value="ECO:0000318"/>
    <property type="project" value="GO_Central"/>
</dbReference>
<dbReference type="FunFam" id="1.25.40.720:FF:000001">
    <property type="entry name" value="Telomere length regulation protein TEL2"/>
    <property type="match status" value="1"/>
</dbReference>
<dbReference type="FunFam" id="1.25.40.720:FF:000003">
    <property type="entry name" value="Telomere length regulation protein TEL2 homolog"/>
    <property type="match status" value="1"/>
</dbReference>
<dbReference type="Gene3D" id="1.25.40.720">
    <property type="entry name" value="Telomere length regulation protein 2, C-terminal domain"/>
    <property type="match status" value="2"/>
</dbReference>
<dbReference type="InterPro" id="IPR016024">
    <property type="entry name" value="ARM-type_fold"/>
</dbReference>
<dbReference type="InterPro" id="IPR038528">
    <property type="entry name" value="TEL2_C_sf"/>
</dbReference>
<dbReference type="InterPro" id="IPR051970">
    <property type="entry name" value="TEL2_Regulation"/>
</dbReference>
<dbReference type="InterPro" id="IPR019337">
    <property type="entry name" value="Telomere_length_regulation_dom"/>
</dbReference>
<dbReference type="PANTHER" id="PTHR15830">
    <property type="entry name" value="TELOMERE LENGTH REGULATION PROTEIN TEL2 FAMILY MEMBER"/>
    <property type="match status" value="1"/>
</dbReference>
<dbReference type="PANTHER" id="PTHR15830:SF10">
    <property type="entry name" value="TELOMERE LENGTH REGULATION PROTEIN TEL2 HOMOLOG"/>
    <property type="match status" value="1"/>
</dbReference>
<dbReference type="Pfam" id="PF25320">
    <property type="entry name" value="TELO2_ARM"/>
    <property type="match status" value="1"/>
</dbReference>
<dbReference type="Pfam" id="PF10193">
    <property type="entry name" value="Telomere_reg-2"/>
    <property type="match status" value="1"/>
</dbReference>
<dbReference type="SUPFAM" id="SSF48371">
    <property type="entry name" value="ARM repeat"/>
    <property type="match status" value="1"/>
</dbReference>
<feature type="chain" id="PRO_0000318518" description="Telomere length regulation protein TEL2 homolog">
    <location>
        <begin position="1"/>
        <end position="835"/>
    </location>
</feature>
<feature type="region of interest" description="Disordered" evidence="2">
    <location>
        <begin position="455"/>
        <end position="501"/>
    </location>
</feature>
<feature type="region of interest" description="Disordered" evidence="2">
    <location>
        <begin position="629"/>
        <end position="648"/>
    </location>
</feature>
<feature type="compositionally biased region" description="Low complexity" evidence="2">
    <location>
        <begin position="464"/>
        <end position="473"/>
    </location>
</feature>
<feature type="compositionally biased region" description="Basic and acidic residues" evidence="2">
    <location>
        <begin position="474"/>
        <end position="486"/>
    </location>
</feature>
<feature type="compositionally biased region" description="Acidic residues" evidence="2">
    <location>
        <begin position="488"/>
        <end position="499"/>
    </location>
</feature>
<feature type="compositionally biased region" description="Polar residues" evidence="2">
    <location>
        <begin position="636"/>
        <end position="648"/>
    </location>
</feature>
<organism>
    <name type="scientific">Xenopus laevis</name>
    <name type="common">African clawed frog</name>
    <dbReference type="NCBI Taxonomy" id="8355"/>
    <lineage>
        <taxon>Eukaryota</taxon>
        <taxon>Metazoa</taxon>
        <taxon>Chordata</taxon>
        <taxon>Craniata</taxon>
        <taxon>Vertebrata</taxon>
        <taxon>Euteleostomi</taxon>
        <taxon>Amphibia</taxon>
        <taxon>Batrachia</taxon>
        <taxon>Anura</taxon>
        <taxon>Pipoidea</taxon>
        <taxon>Pipidae</taxon>
        <taxon>Xenopodinae</taxon>
        <taxon>Xenopus</taxon>
        <taxon>Xenopus</taxon>
    </lineage>
</organism>
<reference key="1">
    <citation type="submission" date="2004-06" db="EMBL/GenBank/DDBJ databases">
        <authorList>
            <consortium name="NIH - Xenopus Gene Collection (XGC) project"/>
        </authorList>
    </citation>
    <scope>NUCLEOTIDE SEQUENCE [LARGE SCALE MRNA]</scope>
    <source>
        <tissue>Embryo</tissue>
    </source>
</reference>